<reference key="1">
    <citation type="submission" date="2007-03" db="EMBL/GenBank/DDBJ databases">
        <title>Genome sequence of Rhodospirillum centenum.</title>
        <authorList>
            <person name="Touchman J.W."/>
            <person name="Bauer C."/>
            <person name="Blankenship R.E."/>
        </authorList>
    </citation>
    <scope>NUCLEOTIDE SEQUENCE [LARGE SCALE GENOMIC DNA]</scope>
    <source>
        <strain>ATCC 51521 / SW</strain>
    </source>
</reference>
<gene>
    <name evidence="1" type="primary">rpsC</name>
    <name type="ordered locus">RC1_0717</name>
</gene>
<dbReference type="EMBL" id="CP000613">
    <property type="protein sequence ID" value="ACI98148.1"/>
    <property type="molecule type" value="Genomic_DNA"/>
</dbReference>
<dbReference type="RefSeq" id="WP_012565939.1">
    <property type="nucleotide sequence ID" value="NC_011420.2"/>
</dbReference>
<dbReference type="SMR" id="B6IRR2"/>
<dbReference type="STRING" id="414684.RC1_0717"/>
<dbReference type="KEGG" id="rce:RC1_0717"/>
<dbReference type="eggNOG" id="COG0092">
    <property type="taxonomic scope" value="Bacteria"/>
</dbReference>
<dbReference type="HOGENOM" id="CLU_058591_0_2_5"/>
<dbReference type="OrthoDB" id="9806396at2"/>
<dbReference type="Proteomes" id="UP000001591">
    <property type="component" value="Chromosome"/>
</dbReference>
<dbReference type="GO" id="GO:0022627">
    <property type="term" value="C:cytosolic small ribosomal subunit"/>
    <property type="evidence" value="ECO:0007669"/>
    <property type="project" value="TreeGrafter"/>
</dbReference>
<dbReference type="GO" id="GO:0003729">
    <property type="term" value="F:mRNA binding"/>
    <property type="evidence" value="ECO:0007669"/>
    <property type="project" value="UniProtKB-UniRule"/>
</dbReference>
<dbReference type="GO" id="GO:0019843">
    <property type="term" value="F:rRNA binding"/>
    <property type="evidence" value="ECO:0007669"/>
    <property type="project" value="UniProtKB-UniRule"/>
</dbReference>
<dbReference type="GO" id="GO:0003735">
    <property type="term" value="F:structural constituent of ribosome"/>
    <property type="evidence" value="ECO:0007669"/>
    <property type="project" value="InterPro"/>
</dbReference>
<dbReference type="GO" id="GO:0006412">
    <property type="term" value="P:translation"/>
    <property type="evidence" value="ECO:0007669"/>
    <property type="project" value="UniProtKB-UniRule"/>
</dbReference>
<dbReference type="CDD" id="cd02412">
    <property type="entry name" value="KH-II_30S_S3"/>
    <property type="match status" value="1"/>
</dbReference>
<dbReference type="FunFam" id="3.30.1140.32:FF:000009">
    <property type="entry name" value="30S ribosomal protein S3"/>
    <property type="match status" value="1"/>
</dbReference>
<dbReference type="FunFam" id="3.30.300.20:FF:000001">
    <property type="entry name" value="30S ribosomal protein S3"/>
    <property type="match status" value="1"/>
</dbReference>
<dbReference type="Gene3D" id="3.30.300.20">
    <property type="match status" value="1"/>
</dbReference>
<dbReference type="Gene3D" id="3.30.1140.32">
    <property type="entry name" value="Ribosomal protein S3, C-terminal domain"/>
    <property type="match status" value="1"/>
</dbReference>
<dbReference type="HAMAP" id="MF_01309_B">
    <property type="entry name" value="Ribosomal_uS3_B"/>
    <property type="match status" value="1"/>
</dbReference>
<dbReference type="InterPro" id="IPR004087">
    <property type="entry name" value="KH_dom"/>
</dbReference>
<dbReference type="InterPro" id="IPR015946">
    <property type="entry name" value="KH_dom-like_a/b"/>
</dbReference>
<dbReference type="InterPro" id="IPR004044">
    <property type="entry name" value="KH_dom_type_2"/>
</dbReference>
<dbReference type="InterPro" id="IPR009019">
    <property type="entry name" value="KH_sf_prok-type"/>
</dbReference>
<dbReference type="InterPro" id="IPR036419">
    <property type="entry name" value="Ribosomal_S3_C_sf"/>
</dbReference>
<dbReference type="InterPro" id="IPR005704">
    <property type="entry name" value="Ribosomal_uS3_bac-typ"/>
</dbReference>
<dbReference type="InterPro" id="IPR001351">
    <property type="entry name" value="Ribosomal_uS3_C"/>
</dbReference>
<dbReference type="InterPro" id="IPR018280">
    <property type="entry name" value="Ribosomal_uS3_CS"/>
</dbReference>
<dbReference type="NCBIfam" id="TIGR01009">
    <property type="entry name" value="rpsC_bact"/>
    <property type="match status" value="1"/>
</dbReference>
<dbReference type="PANTHER" id="PTHR11760">
    <property type="entry name" value="30S/40S RIBOSOMAL PROTEIN S3"/>
    <property type="match status" value="1"/>
</dbReference>
<dbReference type="PANTHER" id="PTHR11760:SF19">
    <property type="entry name" value="SMALL RIBOSOMAL SUBUNIT PROTEIN US3C"/>
    <property type="match status" value="1"/>
</dbReference>
<dbReference type="Pfam" id="PF07650">
    <property type="entry name" value="KH_2"/>
    <property type="match status" value="1"/>
</dbReference>
<dbReference type="Pfam" id="PF00189">
    <property type="entry name" value="Ribosomal_S3_C"/>
    <property type="match status" value="1"/>
</dbReference>
<dbReference type="SMART" id="SM00322">
    <property type="entry name" value="KH"/>
    <property type="match status" value="1"/>
</dbReference>
<dbReference type="SUPFAM" id="SSF54814">
    <property type="entry name" value="Prokaryotic type KH domain (KH-domain type II)"/>
    <property type="match status" value="1"/>
</dbReference>
<dbReference type="SUPFAM" id="SSF54821">
    <property type="entry name" value="Ribosomal protein S3 C-terminal domain"/>
    <property type="match status" value="1"/>
</dbReference>
<dbReference type="PROSITE" id="PS50823">
    <property type="entry name" value="KH_TYPE_2"/>
    <property type="match status" value="1"/>
</dbReference>
<dbReference type="PROSITE" id="PS00548">
    <property type="entry name" value="RIBOSOMAL_S3"/>
    <property type="match status" value="1"/>
</dbReference>
<proteinExistence type="inferred from homology"/>
<feature type="chain" id="PRO_1000141008" description="Small ribosomal subunit protein uS3">
    <location>
        <begin position="1"/>
        <end position="225"/>
    </location>
</feature>
<feature type="domain" description="KH type-2" evidence="1">
    <location>
        <begin position="38"/>
        <end position="106"/>
    </location>
</feature>
<evidence type="ECO:0000255" key="1">
    <source>
        <dbReference type="HAMAP-Rule" id="MF_01309"/>
    </source>
</evidence>
<evidence type="ECO:0000305" key="2"/>
<comment type="function">
    <text evidence="1">Binds the lower part of the 30S subunit head. Binds mRNA in the 70S ribosome, positioning it for translation.</text>
</comment>
<comment type="subunit">
    <text evidence="1">Part of the 30S ribosomal subunit. Forms a tight complex with proteins S10 and S14.</text>
</comment>
<comment type="similarity">
    <text evidence="1">Belongs to the universal ribosomal protein uS3 family.</text>
</comment>
<protein>
    <recommendedName>
        <fullName evidence="1">Small ribosomal subunit protein uS3</fullName>
    </recommendedName>
    <alternativeName>
        <fullName evidence="2">30S ribosomal protein S3</fullName>
    </alternativeName>
</protein>
<keyword id="KW-1185">Reference proteome</keyword>
<keyword id="KW-0687">Ribonucleoprotein</keyword>
<keyword id="KW-0689">Ribosomal protein</keyword>
<keyword id="KW-0694">RNA-binding</keyword>
<keyword id="KW-0699">rRNA-binding</keyword>
<accession>B6IRR2</accession>
<organism>
    <name type="scientific">Rhodospirillum centenum (strain ATCC 51521 / SW)</name>
    <dbReference type="NCBI Taxonomy" id="414684"/>
    <lineage>
        <taxon>Bacteria</taxon>
        <taxon>Pseudomonadati</taxon>
        <taxon>Pseudomonadota</taxon>
        <taxon>Alphaproteobacteria</taxon>
        <taxon>Rhodospirillales</taxon>
        <taxon>Rhodospirillaceae</taxon>
        <taxon>Rhodospirillum</taxon>
    </lineage>
</organism>
<name>RS3_RHOCS</name>
<sequence length="225" mass="24945">MGQKVNPVGLRLGINRTWDSRWFAARDYAVLLHQDLKLRKFLQGKLQAAGVSRIVIERPAKKARVTIHTARPGVVIGKKGADIEKLRGTLGTMAGGEVSLNIVEIRKPELDARLIAENIASQLERRVAFRRAMKRAVQSAMRLGAQGIRINCSGRLGGAEIARLEWYREGRVPLHTLRADIDYGTATAKTTYGTCGVKVWVFKGEILAHDPMAQDKRAMEQAPAR</sequence>